<reference key="1">
    <citation type="submission" date="2005-03" db="EMBL/GenBank/DDBJ databases">
        <title>Ribosomal protein sequences from Lysiphlebus testaceipes.</title>
        <authorList>
            <person name="Weathersbee A.A. III"/>
            <person name="Hunter W.B."/>
            <person name="Panchal T.D."/>
            <person name="Dang P.M."/>
        </authorList>
    </citation>
    <scope>NUCLEOTIDE SEQUENCE [MRNA]</scope>
    <source>
        <strain>Florida</strain>
    </source>
</reference>
<name>RS3A_LYSTE</name>
<keyword id="KW-0963">Cytoplasm</keyword>
<keyword id="KW-0687">Ribonucleoprotein</keyword>
<keyword id="KW-0689">Ribosomal protein</keyword>
<sequence>MAVGKNKGLSKGGKKGLKKKIVDPFTRKDWYDIKAPSMFTTRQVGKTLVNRTQGTKIASEGLKGRVVEVSLADLQSDADAERSFRKFRLIVEDVQNRSVLCNFHGMDLTTDKLRSMVKKWQTLIEAHVDVKTTDGYLLRIFCIGFTQKDQMSTRKTSYAQHSQVRNIRRKMVSIVTDEITKCDLKGVVTKLVPDAIAKDIEKACQGIYPLHDVYIRKVKVLKKPRFELSKLLELHGDGGSKTGEVGETGSKVDRPEGYEPPVQETV</sequence>
<proteinExistence type="evidence at transcript level"/>
<feature type="initiator methionine" description="Removed" evidence="1">
    <location>
        <position position="1"/>
    </location>
</feature>
<feature type="chain" id="PRO_0000389316" description="Small ribosomal subunit protein eS1">
    <location>
        <begin position="2"/>
        <end position="266"/>
    </location>
</feature>
<feature type="region of interest" description="Disordered" evidence="2">
    <location>
        <begin position="237"/>
        <end position="266"/>
    </location>
</feature>
<evidence type="ECO:0000255" key="1">
    <source>
        <dbReference type="HAMAP-Rule" id="MF_03122"/>
    </source>
</evidence>
<evidence type="ECO:0000256" key="2">
    <source>
        <dbReference type="SAM" id="MobiDB-lite"/>
    </source>
</evidence>
<evidence type="ECO:0000305" key="3"/>
<accession>Q56FG9</accession>
<comment type="subunit">
    <text evidence="1">Component of the small ribosomal subunit. Mature ribosomes consist of a small (40S) and a large (60S) subunit. The 40S subunit contains about 33 different proteins and 1 molecule of RNA (18S). The 60S subunit contains about 49 different proteins and 3 molecules of RNA (28S, 5.8S and 5S).</text>
</comment>
<comment type="subcellular location">
    <subcellularLocation>
        <location evidence="1">Cytoplasm</location>
    </subcellularLocation>
</comment>
<comment type="similarity">
    <text evidence="1">Belongs to the eukaryotic ribosomal protein eS1 family.</text>
</comment>
<organism>
    <name type="scientific">Lysiphlebus testaceipes</name>
    <name type="common">Greenbugs aphid parastoid</name>
    <dbReference type="NCBI Taxonomy" id="77504"/>
    <lineage>
        <taxon>Eukaryota</taxon>
        <taxon>Metazoa</taxon>
        <taxon>Ecdysozoa</taxon>
        <taxon>Arthropoda</taxon>
        <taxon>Hexapoda</taxon>
        <taxon>Insecta</taxon>
        <taxon>Pterygota</taxon>
        <taxon>Neoptera</taxon>
        <taxon>Endopterygota</taxon>
        <taxon>Hymenoptera</taxon>
        <taxon>Apocrita</taxon>
        <taxon>Ichneumonoidea</taxon>
        <taxon>Braconidae</taxon>
        <taxon>Aphidiinae</taxon>
        <taxon>Lysiphlebus</taxon>
    </lineage>
</organism>
<dbReference type="EMBL" id="AY961531">
    <property type="protein sequence ID" value="AAX62433.1"/>
    <property type="molecule type" value="mRNA"/>
</dbReference>
<dbReference type="SMR" id="Q56FG9"/>
<dbReference type="GO" id="GO:0022627">
    <property type="term" value="C:cytosolic small ribosomal subunit"/>
    <property type="evidence" value="ECO:0007669"/>
    <property type="project" value="UniProtKB-UniRule"/>
</dbReference>
<dbReference type="GO" id="GO:0003735">
    <property type="term" value="F:structural constituent of ribosome"/>
    <property type="evidence" value="ECO:0007669"/>
    <property type="project" value="UniProtKB-UniRule"/>
</dbReference>
<dbReference type="GO" id="GO:0006412">
    <property type="term" value="P:translation"/>
    <property type="evidence" value="ECO:0007669"/>
    <property type="project" value="UniProtKB-UniRule"/>
</dbReference>
<dbReference type="HAMAP" id="MF_03122">
    <property type="entry name" value="Ribosomal_eS1_euk"/>
    <property type="match status" value="1"/>
</dbReference>
<dbReference type="InterPro" id="IPR001593">
    <property type="entry name" value="Ribosomal_eS1"/>
</dbReference>
<dbReference type="InterPro" id="IPR018281">
    <property type="entry name" value="Ribosomal_eS1_CS"/>
</dbReference>
<dbReference type="InterPro" id="IPR027500">
    <property type="entry name" value="Ribosomal_eS1_euk"/>
</dbReference>
<dbReference type="PANTHER" id="PTHR11830">
    <property type="entry name" value="40S RIBOSOMAL PROTEIN S3A"/>
    <property type="match status" value="1"/>
</dbReference>
<dbReference type="Pfam" id="PF01015">
    <property type="entry name" value="Ribosomal_S3Ae"/>
    <property type="match status" value="1"/>
</dbReference>
<dbReference type="SMART" id="SM01397">
    <property type="entry name" value="Ribosomal_S3Ae"/>
    <property type="match status" value="1"/>
</dbReference>
<dbReference type="PROSITE" id="PS01191">
    <property type="entry name" value="RIBOSOMAL_S3AE"/>
    <property type="match status" value="1"/>
</dbReference>
<protein>
    <recommendedName>
        <fullName evidence="1">Small ribosomal subunit protein eS1</fullName>
    </recommendedName>
    <alternativeName>
        <fullName evidence="3">40S ribosomal protein S3a</fullName>
    </alternativeName>
</protein>